<geneLocation type="plasmid">
    <name>megaplasmid TM1040</name>
</geneLocation>
<evidence type="ECO:0000255" key="1">
    <source>
        <dbReference type="HAMAP-Rule" id="MF_00075"/>
    </source>
</evidence>
<dbReference type="EMBL" id="CP000376">
    <property type="protein sequence ID" value="ABF62526.1"/>
    <property type="molecule type" value="Genomic_DNA"/>
</dbReference>
<dbReference type="RefSeq" id="WP_005620785.1">
    <property type="nucleotide sequence ID" value="NC_008043.1"/>
</dbReference>
<dbReference type="SMR" id="Q1GLE0"/>
<dbReference type="GeneID" id="28251637"/>
<dbReference type="KEGG" id="sit:TM1040_3557"/>
<dbReference type="HOGENOM" id="CLU_151267_1_0_5"/>
<dbReference type="OrthoDB" id="9803250at2"/>
<dbReference type="Proteomes" id="UP000000636">
    <property type="component" value="Plasmid megaplasmid TM1040"/>
</dbReference>
<dbReference type="GO" id="GO:0005829">
    <property type="term" value="C:cytosol"/>
    <property type="evidence" value="ECO:0007669"/>
    <property type="project" value="TreeGrafter"/>
</dbReference>
<dbReference type="GO" id="GO:0043022">
    <property type="term" value="F:ribosome binding"/>
    <property type="evidence" value="ECO:0007669"/>
    <property type="project" value="UniProtKB-UniRule"/>
</dbReference>
<dbReference type="GO" id="GO:0019843">
    <property type="term" value="F:rRNA binding"/>
    <property type="evidence" value="ECO:0007669"/>
    <property type="project" value="UniProtKB-UniRule"/>
</dbReference>
<dbReference type="GO" id="GO:0003743">
    <property type="term" value="F:translation initiation factor activity"/>
    <property type="evidence" value="ECO:0007669"/>
    <property type="project" value="UniProtKB-UniRule"/>
</dbReference>
<dbReference type="CDD" id="cd04451">
    <property type="entry name" value="S1_IF1"/>
    <property type="match status" value="1"/>
</dbReference>
<dbReference type="FunFam" id="2.40.50.140:FF:000002">
    <property type="entry name" value="Translation initiation factor IF-1"/>
    <property type="match status" value="1"/>
</dbReference>
<dbReference type="Gene3D" id="2.40.50.140">
    <property type="entry name" value="Nucleic acid-binding proteins"/>
    <property type="match status" value="1"/>
</dbReference>
<dbReference type="HAMAP" id="MF_00075">
    <property type="entry name" value="IF_1"/>
    <property type="match status" value="1"/>
</dbReference>
<dbReference type="InterPro" id="IPR012340">
    <property type="entry name" value="NA-bd_OB-fold"/>
</dbReference>
<dbReference type="InterPro" id="IPR006196">
    <property type="entry name" value="RNA-binding_domain_S1_IF1"/>
</dbReference>
<dbReference type="InterPro" id="IPR003029">
    <property type="entry name" value="S1_domain"/>
</dbReference>
<dbReference type="InterPro" id="IPR004368">
    <property type="entry name" value="TIF_IF1"/>
</dbReference>
<dbReference type="NCBIfam" id="TIGR00008">
    <property type="entry name" value="infA"/>
    <property type="match status" value="1"/>
</dbReference>
<dbReference type="PANTHER" id="PTHR33370">
    <property type="entry name" value="TRANSLATION INITIATION FACTOR IF-1, CHLOROPLASTIC"/>
    <property type="match status" value="1"/>
</dbReference>
<dbReference type="PANTHER" id="PTHR33370:SF1">
    <property type="entry name" value="TRANSLATION INITIATION FACTOR IF-1, CHLOROPLASTIC"/>
    <property type="match status" value="1"/>
</dbReference>
<dbReference type="Pfam" id="PF01176">
    <property type="entry name" value="eIF-1a"/>
    <property type="match status" value="1"/>
</dbReference>
<dbReference type="SMART" id="SM00316">
    <property type="entry name" value="S1"/>
    <property type="match status" value="1"/>
</dbReference>
<dbReference type="SUPFAM" id="SSF50249">
    <property type="entry name" value="Nucleic acid-binding proteins"/>
    <property type="match status" value="1"/>
</dbReference>
<dbReference type="PROSITE" id="PS50832">
    <property type="entry name" value="S1_IF1_TYPE"/>
    <property type="match status" value="1"/>
</dbReference>
<protein>
    <recommendedName>
        <fullName evidence="1">Translation initiation factor IF-1</fullName>
    </recommendedName>
</protein>
<comment type="function">
    <text evidence="1">One of the essential components for the initiation of protein synthesis. Stabilizes the binding of IF-2 and IF-3 on the 30S subunit to which N-formylmethionyl-tRNA(fMet) subsequently binds. Helps modulate mRNA selection, yielding the 30S pre-initiation complex (PIC). Upon addition of the 50S ribosomal subunit IF-1, IF-2 and IF-3 are released leaving the mature 70S translation initiation complex.</text>
</comment>
<comment type="subunit">
    <text evidence="1">Component of the 30S ribosomal translation pre-initiation complex which assembles on the 30S ribosome in the order IF-2 and IF-3, IF-1 and N-formylmethionyl-tRNA(fMet); mRNA recruitment can occur at any time during PIC assembly.</text>
</comment>
<comment type="subcellular location">
    <subcellularLocation>
        <location evidence="1">Cytoplasm</location>
    </subcellularLocation>
</comment>
<comment type="similarity">
    <text evidence="1">Belongs to the IF-1 family.</text>
</comment>
<proteinExistence type="inferred from homology"/>
<name>IF1_RUEST</name>
<sequence>MAKEDTLEFPGVVKELLPNATFRVELENGHEIIAHTAGKMRKNRIRVLAGDRVQVEMTPYDLTKGRINYRFK</sequence>
<reference key="1">
    <citation type="submission" date="2006-05" db="EMBL/GenBank/DDBJ databases">
        <title>Complete sequence of megaplasmid of Silicibacter sp. TM1040.</title>
        <authorList>
            <consortium name="US DOE Joint Genome Institute"/>
            <person name="Copeland A."/>
            <person name="Lucas S."/>
            <person name="Lapidus A."/>
            <person name="Barry K."/>
            <person name="Detter J.C."/>
            <person name="Glavina del Rio T."/>
            <person name="Hammon N."/>
            <person name="Israni S."/>
            <person name="Dalin E."/>
            <person name="Tice H."/>
            <person name="Pitluck S."/>
            <person name="Brettin T."/>
            <person name="Bruce D."/>
            <person name="Han C."/>
            <person name="Tapia R."/>
            <person name="Goodwin L."/>
            <person name="Thompson L.S."/>
            <person name="Gilna P."/>
            <person name="Schmutz J."/>
            <person name="Larimer F."/>
            <person name="Land M."/>
            <person name="Hauser L."/>
            <person name="Kyrpides N."/>
            <person name="Kim E."/>
            <person name="Belas R."/>
            <person name="Moran M.A."/>
            <person name="Buchan A."/>
            <person name="Gonzalez J.M."/>
            <person name="Schell M.A."/>
            <person name="Sun F."/>
            <person name="Richardson P."/>
        </authorList>
    </citation>
    <scope>NUCLEOTIDE SEQUENCE [LARGE SCALE GENOMIC DNA]</scope>
    <source>
        <strain>TM1040</strain>
    </source>
</reference>
<feature type="chain" id="PRO_0000263873" description="Translation initiation factor IF-1">
    <location>
        <begin position="1"/>
        <end position="72"/>
    </location>
</feature>
<feature type="domain" description="S1-like" evidence="1">
    <location>
        <begin position="1"/>
        <end position="72"/>
    </location>
</feature>
<accession>Q1GLE0</accession>
<keyword id="KW-0963">Cytoplasm</keyword>
<keyword id="KW-0396">Initiation factor</keyword>
<keyword id="KW-0614">Plasmid</keyword>
<keyword id="KW-0648">Protein biosynthesis</keyword>
<keyword id="KW-1185">Reference proteome</keyword>
<keyword id="KW-0694">RNA-binding</keyword>
<keyword id="KW-0699">rRNA-binding</keyword>
<gene>
    <name evidence="1" type="primary">infA</name>
    <name type="ordered locus">TM1040_3557</name>
</gene>
<organism>
    <name type="scientific">Ruegeria sp. (strain TM1040)</name>
    <name type="common">Silicibacter sp.</name>
    <dbReference type="NCBI Taxonomy" id="292414"/>
    <lineage>
        <taxon>Bacteria</taxon>
        <taxon>Pseudomonadati</taxon>
        <taxon>Pseudomonadota</taxon>
        <taxon>Alphaproteobacteria</taxon>
        <taxon>Rhodobacterales</taxon>
        <taxon>Roseobacteraceae</taxon>
        <taxon>Ruegeria</taxon>
    </lineage>
</organism>